<accession>B5ZNK8</accession>
<feature type="chain" id="PRO_1000198621" description="tRNA-specific 2-thiouridylase MnmA">
    <location>
        <begin position="1"/>
        <end position="399"/>
    </location>
</feature>
<feature type="region of interest" description="Interaction with tRNA" evidence="1">
    <location>
        <begin position="163"/>
        <end position="165"/>
    </location>
</feature>
<feature type="active site" description="Nucleophile" evidence="1">
    <location>
        <position position="112"/>
    </location>
</feature>
<feature type="active site" description="Cysteine persulfide intermediate" evidence="1">
    <location>
        <position position="213"/>
    </location>
</feature>
<feature type="binding site" evidence="1">
    <location>
        <begin position="18"/>
        <end position="25"/>
    </location>
    <ligand>
        <name>ATP</name>
        <dbReference type="ChEBI" id="CHEBI:30616"/>
    </ligand>
</feature>
<feature type="binding site" evidence="1">
    <location>
        <position position="44"/>
    </location>
    <ligand>
        <name>ATP</name>
        <dbReference type="ChEBI" id="CHEBI:30616"/>
    </ligand>
</feature>
<feature type="binding site" evidence="1">
    <location>
        <position position="136"/>
    </location>
    <ligand>
        <name>ATP</name>
        <dbReference type="ChEBI" id="CHEBI:30616"/>
    </ligand>
</feature>
<feature type="site" description="Interaction with tRNA" evidence="1">
    <location>
        <position position="137"/>
    </location>
</feature>
<feature type="site" description="Interaction with tRNA" evidence="1">
    <location>
        <position position="356"/>
    </location>
</feature>
<feature type="disulfide bond" description="Alternate" evidence="1">
    <location>
        <begin position="112"/>
        <end position="213"/>
    </location>
</feature>
<keyword id="KW-0067">ATP-binding</keyword>
<keyword id="KW-0963">Cytoplasm</keyword>
<keyword id="KW-1015">Disulfide bond</keyword>
<keyword id="KW-0547">Nucleotide-binding</keyword>
<keyword id="KW-1185">Reference proteome</keyword>
<keyword id="KW-0694">RNA-binding</keyword>
<keyword id="KW-0808">Transferase</keyword>
<keyword id="KW-0819">tRNA processing</keyword>
<keyword id="KW-0820">tRNA-binding</keyword>
<comment type="function">
    <text evidence="1">Catalyzes the 2-thiolation of uridine at the wobble position (U34) of tRNA, leading to the formation of s(2)U34.</text>
</comment>
<comment type="catalytic activity">
    <reaction evidence="1">
        <text>S-sulfanyl-L-cysteinyl-[protein] + uridine(34) in tRNA + AH2 + ATP = 2-thiouridine(34) in tRNA + L-cysteinyl-[protein] + A + AMP + diphosphate + H(+)</text>
        <dbReference type="Rhea" id="RHEA:47032"/>
        <dbReference type="Rhea" id="RHEA-COMP:10131"/>
        <dbReference type="Rhea" id="RHEA-COMP:11726"/>
        <dbReference type="Rhea" id="RHEA-COMP:11727"/>
        <dbReference type="Rhea" id="RHEA-COMP:11728"/>
        <dbReference type="ChEBI" id="CHEBI:13193"/>
        <dbReference type="ChEBI" id="CHEBI:15378"/>
        <dbReference type="ChEBI" id="CHEBI:17499"/>
        <dbReference type="ChEBI" id="CHEBI:29950"/>
        <dbReference type="ChEBI" id="CHEBI:30616"/>
        <dbReference type="ChEBI" id="CHEBI:33019"/>
        <dbReference type="ChEBI" id="CHEBI:61963"/>
        <dbReference type="ChEBI" id="CHEBI:65315"/>
        <dbReference type="ChEBI" id="CHEBI:87170"/>
        <dbReference type="ChEBI" id="CHEBI:456215"/>
        <dbReference type="EC" id="2.8.1.13"/>
    </reaction>
</comment>
<comment type="subcellular location">
    <subcellularLocation>
        <location evidence="1">Cytoplasm</location>
    </subcellularLocation>
</comment>
<comment type="similarity">
    <text evidence="1">Belongs to the MnmA/TRMU family.</text>
</comment>
<protein>
    <recommendedName>
        <fullName evidence="1">tRNA-specific 2-thiouridylase MnmA</fullName>
        <ecNumber evidence="1">2.8.1.13</ecNumber>
    </recommendedName>
</protein>
<organism>
    <name type="scientific">Rhizobium leguminosarum bv. trifolii (strain WSM2304)</name>
    <dbReference type="NCBI Taxonomy" id="395492"/>
    <lineage>
        <taxon>Bacteria</taxon>
        <taxon>Pseudomonadati</taxon>
        <taxon>Pseudomonadota</taxon>
        <taxon>Alphaproteobacteria</taxon>
        <taxon>Hyphomicrobiales</taxon>
        <taxon>Rhizobiaceae</taxon>
        <taxon>Rhizobium/Agrobacterium group</taxon>
        <taxon>Rhizobium</taxon>
    </lineage>
</organism>
<dbReference type="EC" id="2.8.1.13" evidence="1"/>
<dbReference type="EMBL" id="CP001191">
    <property type="protein sequence ID" value="ACI56456.1"/>
    <property type="molecule type" value="Genomic_DNA"/>
</dbReference>
<dbReference type="RefSeq" id="WP_012558831.1">
    <property type="nucleotide sequence ID" value="NC_011369.1"/>
</dbReference>
<dbReference type="SMR" id="B5ZNK8"/>
<dbReference type="STRING" id="395492.Rleg2_3189"/>
<dbReference type="KEGG" id="rlt:Rleg2_3189"/>
<dbReference type="eggNOG" id="COG0482">
    <property type="taxonomic scope" value="Bacteria"/>
</dbReference>
<dbReference type="HOGENOM" id="CLU_035188_0_0_5"/>
<dbReference type="Proteomes" id="UP000008330">
    <property type="component" value="Chromosome"/>
</dbReference>
<dbReference type="GO" id="GO:0005737">
    <property type="term" value="C:cytoplasm"/>
    <property type="evidence" value="ECO:0007669"/>
    <property type="project" value="UniProtKB-SubCell"/>
</dbReference>
<dbReference type="GO" id="GO:0005524">
    <property type="term" value="F:ATP binding"/>
    <property type="evidence" value="ECO:0007669"/>
    <property type="project" value="UniProtKB-KW"/>
</dbReference>
<dbReference type="GO" id="GO:0000049">
    <property type="term" value="F:tRNA binding"/>
    <property type="evidence" value="ECO:0007669"/>
    <property type="project" value="UniProtKB-KW"/>
</dbReference>
<dbReference type="GO" id="GO:0103016">
    <property type="term" value="F:tRNA-uridine 2-sulfurtransferase activity"/>
    <property type="evidence" value="ECO:0007669"/>
    <property type="project" value="UniProtKB-EC"/>
</dbReference>
<dbReference type="GO" id="GO:0002143">
    <property type="term" value="P:tRNA wobble position uridine thiolation"/>
    <property type="evidence" value="ECO:0007669"/>
    <property type="project" value="TreeGrafter"/>
</dbReference>
<dbReference type="CDD" id="cd01998">
    <property type="entry name" value="MnmA_TRMU-like"/>
    <property type="match status" value="1"/>
</dbReference>
<dbReference type="FunFam" id="3.40.50.620:FF:000115">
    <property type="entry name" value="tRNA-specific 2-thiouridylase MnmA"/>
    <property type="match status" value="1"/>
</dbReference>
<dbReference type="Gene3D" id="2.30.30.280">
    <property type="entry name" value="Adenine nucleotide alpha hydrolases-like domains"/>
    <property type="match status" value="1"/>
</dbReference>
<dbReference type="Gene3D" id="3.40.50.620">
    <property type="entry name" value="HUPs"/>
    <property type="match status" value="1"/>
</dbReference>
<dbReference type="Gene3D" id="2.40.30.10">
    <property type="entry name" value="Translation factors"/>
    <property type="match status" value="1"/>
</dbReference>
<dbReference type="HAMAP" id="MF_00144">
    <property type="entry name" value="tRNA_thiouridyl_MnmA"/>
    <property type="match status" value="1"/>
</dbReference>
<dbReference type="InterPro" id="IPR004506">
    <property type="entry name" value="MnmA-like"/>
</dbReference>
<dbReference type="InterPro" id="IPR046885">
    <property type="entry name" value="MnmA-like_C"/>
</dbReference>
<dbReference type="InterPro" id="IPR046884">
    <property type="entry name" value="MnmA-like_central"/>
</dbReference>
<dbReference type="InterPro" id="IPR023382">
    <property type="entry name" value="MnmA-like_central_sf"/>
</dbReference>
<dbReference type="InterPro" id="IPR014729">
    <property type="entry name" value="Rossmann-like_a/b/a_fold"/>
</dbReference>
<dbReference type="NCBIfam" id="NF001138">
    <property type="entry name" value="PRK00143.1"/>
    <property type="match status" value="1"/>
</dbReference>
<dbReference type="NCBIfam" id="TIGR00420">
    <property type="entry name" value="trmU"/>
    <property type="match status" value="1"/>
</dbReference>
<dbReference type="PANTHER" id="PTHR11933:SF5">
    <property type="entry name" value="MITOCHONDRIAL TRNA-SPECIFIC 2-THIOURIDYLASE 1"/>
    <property type="match status" value="1"/>
</dbReference>
<dbReference type="PANTHER" id="PTHR11933">
    <property type="entry name" value="TRNA 5-METHYLAMINOMETHYL-2-THIOURIDYLATE -METHYLTRANSFERASE"/>
    <property type="match status" value="1"/>
</dbReference>
<dbReference type="Pfam" id="PF03054">
    <property type="entry name" value="tRNA_Me_trans"/>
    <property type="match status" value="1"/>
</dbReference>
<dbReference type="Pfam" id="PF20258">
    <property type="entry name" value="tRNA_Me_trans_C"/>
    <property type="match status" value="1"/>
</dbReference>
<dbReference type="Pfam" id="PF20259">
    <property type="entry name" value="tRNA_Me_trans_M"/>
    <property type="match status" value="1"/>
</dbReference>
<dbReference type="SUPFAM" id="SSF52402">
    <property type="entry name" value="Adenine nucleotide alpha hydrolases-like"/>
    <property type="match status" value="1"/>
</dbReference>
<sequence length="399" mass="42998">MNTLDFDKQPEETRVVVAMSGGVDSSVVAGLLKQQGYDVLGITLQLYDHGAAVHRAGSCCAGQDIDDARRVCETLGIPHYVLDYEKRFRETVINPFAESYVAGETPIPCVSCNQTVKFADLLATAKELGADALATGHYIRSRPNPSPEHPGRRALYRPADADRDQSYFLFATTQEQIDYLRFPLGGLPKAETRRLAEEMGLVVAKKADSQDICFVPQGKYSDIITKLKPNAALAGEIVHLDGRVLGTHEGILHFTIGQRRGIGIATGEPLYVVFLDARSRRVIVGPKEALETHRVYLRDVNWLGDETLAQAATGDGFACYAKVRSTRAPAPAVLHIDATGTYVDLTVGEAGIAPGQACALYSAPGDNARVFGGGFIERSEREPSAEASLKALLASPVAA</sequence>
<gene>
    <name evidence="1" type="primary">mnmA</name>
    <name type="ordered locus">Rleg2_3189</name>
</gene>
<evidence type="ECO:0000255" key="1">
    <source>
        <dbReference type="HAMAP-Rule" id="MF_00144"/>
    </source>
</evidence>
<proteinExistence type="inferred from homology"/>
<reference key="1">
    <citation type="journal article" date="2010" name="Stand. Genomic Sci.">
        <title>Complete genome sequence of Rhizobium leguminosarum bv trifolii strain WSM2304, an effective microsymbiont of the South American clover Trifolium polymorphum.</title>
        <authorList>
            <person name="Reeve W."/>
            <person name="O'Hara G."/>
            <person name="Chain P."/>
            <person name="Ardley J."/>
            <person name="Brau L."/>
            <person name="Nandesena K."/>
            <person name="Tiwari R."/>
            <person name="Malfatti S."/>
            <person name="Kiss H."/>
            <person name="Lapidus A."/>
            <person name="Copeland A."/>
            <person name="Nolan M."/>
            <person name="Land M."/>
            <person name="Ivanova N."/>
            <person name="Mavromatis K."/>
            <person name="Markowitz V."/>
            <person name="Kyrpides N."/>
            <person name="Melino V."/>
            <person name="Denton M."/>
            <person name="Yates R."/>
            <person name="Howieson J."/>
        </authorList>
    </citation>
    <scope>NUCLEOTIDE SEQUENCE [LARGE SCALE GENOMIC DNA]</scope>
    <source>
        <strain>WSM2304</strain>
    </source>
</reference>
<name>MNMA_RHILW</name>